<name>YE53A_YEAST</name>
<gene>
    <name evidence="4" type="ordered locus">YEL053W-A</name>
</gene>
<feature type="signal peptide" evidence="1">
    <location>
        <begin position="1"/>
        <end position="24"/>
    </location>
</feature>
<feature type="chain" id="PRO_0000431007" description="Putative uncharacterized membrane protein YEL053W-A">
    <location>
        <begin position="25"/>
        <end position="115"/>
    </location>
</feature>
<feature type="transmembrane region" description="Helical; Name=1" evidence="1">
    <location>
        <begin position="39"/>
        <end position="59"/>
    </location>
</feature>
<feature type="transmembrane region" description="Helical; Name=2" evidence="1">
    <location>
        <begin position="93"/>
        <end position="113"/>
    </location>
</feature>
<comment type="subcellular location">
    <subcellularLocation>
        <location evidence="1">Membrane</location>
        <topology evidence="1">Multi-pass membrane protein</topology>
    </subcellularLocation>
</comment>
<comment type="miscellaneous">
    <text evidence="2">Partially overlaps RPL12A.</text>
</comment>
<comment type="caution">
    <text evidence="3">Product of a dubious gene prediction unlikely to encode a functional protein. Because of that it is not part of the S.cerevisiae S288c complete/reference proteome set.</text>
</comment>
<organism>
    <name type="scientific">Saccharomyces cerevisiae (strain ATCC 204508 / S288c)</name>
    <name type="common">Baker's yeast</name>
    <dbReference type="NCBI Taxonomy" id="559292"/>
    <lineage>
        <taxon>Eukaryota</taxon>
        <taxon>Fungi</taxon>
        <taxon>Dikarya</taxon>
        <taxon>Ascomycota</taxon>
        <taxon>Saccharomycotina</taxon>
        <taxon>Saccharomycetes</taxon>
        <taxon>Saccharomycetales</taxon>
        <taxon>Saccharomycetaceae</taxon>
        <taxon>Saccharomyces</taxon>
    </lineage>
</organism>
<accession>A0A023PXC2</accession>
<proteinExistence type="uncertain"/>
<evidence type="ECO:0000255" key="1"/>
<evidence type="ECO:0000305" key="2"/>
<evidence type="ECO:0000305" key="3">
    <source>
    </source>
</evidence>
<evidence type="ECO:0000312" key="4">
    <source>
        <dbReference type="SGD" id="S000028744"/>
    </source>
</evidence>
<keyword id="KW-0472">Membrane</keyword>
<keyword id="KW-0732">Signal</keyword>
<keyword id="KW-0812">Transmembrane</keyword>
<keyword id="KW-1133">Transmembrane helix</keyword>
<reference key="1">
    <citation type="journal article" date="1997" name="Nature">
        <title>The nucleotide sequence of Saccharomyces cerevisiae chromosome V.</title>
        <authorList>
            <person name="Dietrich F.S."/>
            <person name="Mulligan J.T."/>
            <person name="Hennessy K.M."/>
            <person name="Yelton M.A."/>
            <person name="Allen E."/>
            <person name="Araujo R."/>
            <person name="Aviles E."/>
            <person name="Berno A."/>
            <person name="Brennan T."/>
            <person name="Carpenter J."/>
            <person name="Chen E."/>
            <person name="Cherry J.M."/>
            <person name="Chung E."/>
            <person name="Duncan M."/>
            <person name="Guzman E."/>
            <person name="Hartzell G."/>
            <person name="Hunicke-Smith S."/>
            <person name="Hyman R.W."/>
            <person name="Kayser A."/>
            <person name="Komp C."/>
            <person name="Lashkari D."/>
            <person name="Lew H."/>
            <person name="Lin D."/>
            <person name="Mosedale D."/>
            <person name="Nakahara K."/>
            <person name="Namath A."/>
            <person name="Norgren R."/>
            <person name="Oefner P."/>
            <person name="Oh C."/>
            <person name="Petel F.X."/>
            <person name="Roberts D."/>
            <person name="Sehl P."/>
            <person name="Schramm S."/>
            <person name="Shogren T."/>
            <person name="Smith V."/>
            <person name="Taylor P."/>
            <person name="Wei Y."/>
            <person name="Botstein D."/>
            <person name="Davis R.W."/>
        </authorList>
    </citation>
    <scope>NUCLEOTIDE SEQUENCE [LARGE SCALE GENOMIC DNA]</scope>
    <source>
        <strain>ATCC 204508 / S288c</strain>
    </source>
</reference>
<reference key="2">
    <citation type="journal article" date="2014" name="G3 (Bethesda)">
        <title>The reference genome sequence of Saccharomyces cerevisiae: Then and now.</title>
        <authorList>
            <person name="Engel S.R."/>
            <person name="Dietrich F.S."/>
            <person name="Fisk D.G."/>
            <person name="Binkley G."/>
            <person name="Balakrishnan R."/>
            <person name="Costanzo M.C."/>
            <person name="Dwight S.S."/>
            <person name="Hitz B.C."/>
            <person name="Karra K."/>
            <person name="Nash R.S."/>
            <person name="Weng S."/>
            <person name="Wong E.D."/>
            <person name="Lloyd P."/>
            <person name="Skrzypek M.S."/>
            <person name="Miyasato S.R."/>
            <person name="Simison M."/>
            <person name="Cherry J.M."/>
        </authorList>
    </citation>
    <scope>GENOME REANNOTATION</scope>
    <source>
        <strain>ATCC 204508 / S288c</strain>
    </source>
</reference>
<dbReference type="EMBL" id="KJ412226">
    <property type="protein sequence ID" value="AHX39269.1"/>
    <property type="molecule type" value="Genomic_DNA"/>
</dbReference>
<dbReference type="PaxDb" id="4932-YEL053W-A"/>
<dbReference type="EnsemblFungi" id="YEL053W-A_mRNA">
    <property type="protein sequence ID" value="YEL053W-A"/>
    <property type="gene ID" value="YEL053W-A"/>
</dbReference>
<dbReference type="AGR" id="SGD:S000028744"/>
<dbReference type="SGD" id="S000028744">
    <property type="gene designation" value="YEL053W-A"/>
</dbReference>
<dbReference type="eggNOG" id="ENOG502SBUV">
    <property type="taxonomic scope" value="Eukaryota"/>
</dbReference>
<dbReference type="GeneTree" id="ENSGT00940000176684"/>
<dbReference type="HOGENOM" id="CLU_2110367_0_0_1"/>
<dbReference type="GO" id="GO:0016020">
    <property type="term" value="C:membrane"/>
    <property type="evidence" value="ECO:0007669"/>
    <property type="project" value="UniProtKB-SubCell"/>
</dbReference>
<protein>
    <recommendedName>
        <fullName evidence="2">Putative uncharacterized membrane protein YEL053W-A</fullName>
    </recommendedName>
</protein>
<sequence length="115" mass="12414">MLPLCLTFLSFFLSLGGSFKAVMTKEEADGTTEAAACLFWIFNWTVTLIPLNSLVALAISSPTFFGDRPKGPIFGAKAAEAPTSPPTALRYKYLTSLGSNFGGIFVYPLFLLSTF</sequence>